<name>NS1_I60A0</name>
<sequence length="217" mass="24429">MDPNTVSSFQVDCFLWHVRKQVADQELGDAPFLDRLRRDQKSLRGRGSTLGLNIETATRVGKQIVERILKEESDEALKMTMASAPASRYLTDMTIEEMSRDWFMLMPKQKVAGPLCIRMDQAIMDKNIILKANFSVIFDRLETLILLRAFTEAGAIVGEISPLPSLPGHTNEDVKNAIGVLIGGLEWNDNTVRVSKTLQRFAWRSSDENGRPPLTPK</sequence>
<accession>P21431</accession>
<accession>Q540C8</accession>
<proteinExistence type="inferred from homology"/>
<organismHost>
    <name type="scientific">Aves</name>
    <dbReference type="NCBI Taxonomy" id="8782"/>
</organismHost>
<organismHost>
    <name type="scientific">Homo sapiens</name>
    <name type="common">Human</name>
    <dbReference type="NCBI Taxonomy" id="9606"/>
</organismHost>
<reference key="1">
    <citation type="journal article" date="1988" name="Virology">
        <title>Identification of sequence changes in the cold-adapted, live attenuated influenza vaccine strain, A/Ann Arbor/6/60 (H2N2).</title>
        <authorList>
            <person name="Cox N.J."/>
            <person name="Kitame F."/>
            <person name="Kendal A.P."/>
            <person name="Maassab H.F."/>
            <person name="Naeve C."/>
        </authorList>
    </citation>
    <scope>NUCLEOTIDE SEQUENCE [GENOMIC RNA]</scope>
</reference>
<reference key="2">
    <citation type="journal article" date="2004" name="Virology">
        <title>Genetic analysis of human H2N2 and early H3N2 influenza viruses, 1957-1972: evidence for genetic divergence and multiple reassortment events.</title>
        <authorList>
            <person name="Lindstrom S.E."/>
            <person name="Cox N.J."/>
            <person name="Klimov A."/>
        </authorList>
    </citation>
    <scope>NUCLEOTIDE SEQUENCE [GENOMIC RNA]</scope>
</reference>
<reference key="3">
    <citation type="journal article" date="2003" name="Virology">
        <title>Intracellular warfare between human influenza viruses and human cells: the roles of the viral NS1 protein.</title>
        <authorList>
            <person name="Krug R.M."/>
            <person name="Yuan W."/>
            <person name="Noah D.L."/>
            <person name="Latham A.G."/>
        </authorList>
    </citation>
    <scope>REVIEW</scope>
</reference>
<organism>
    <name type="scientific">Influenza A virus (strain A/Ann Arbor/6/1960 H2N2)</name>
    <dbReference type="NCBI Taxonomy" id="384498"/>
    <lineage>
        <taxon>Viruses</taxon>
        <taxon>Riboviria</taxon>
        <taxon>Orthornavirae</taxon>
        <taxon>Negarnaviricota</taxon>
        <taxon>Polyploviricotina</taxon>
        <taxon>Insthoviricetes</taxon>
        <taxon>Articulavirales</taxon>
        <taxon>Orthomyxoviridae</taxon>
        <taxon>Alphainfluenzavirus</taxon>
        <taxon>Alphainfluenzavirus influenzae</taxon>
        <taxon>Influenza A virus</taxon>
    </lineage>
</organism>
<protein>
    <recommendedName>
        <fullName evidence="1">Non-structural protein 1</fullName>
        <shortName evidence="1">NS1</shortName>
    </recommendedName>
    <alternativeName>
        <fullName evidence="1">NS1A</fullName>
    </alternativeName>
</protein>
<keyword id="KW-0025">Alternative splicing</keyword>
<keyword id="KW-1262">Eukaryotic host gene expression shutoff by virus</keyword>
<keyword id="KW-1035">Host cytoplasm</keyword>
<keyword id="KW-1190">Host gene expression shutoff by virus</keyword>
<keyword id="KW-1192">Host mRNA suppression by virus</keyword>
<keyword id="KW-1048">Host nucleus</keyword>
<keyword id="KW-0945">Host-virus interaction</keyword>
<keyword id="KW-1090">Inhibition of host innate immune response by virus</keyword>
<keyword id="KW-1114">Inhibition of host interferon signaling pathway by virus</keyword>
<keyword id="KW-1102">Inhibition of host PKR by virus</keyword>
<keyword id="KW-1103">Inhibition of host pre-mRNA processing by virus</keyword>
<keyword id="KW-1088">Inhibition of host RIG-I by virus</keyword>
<keyword id="KW-1113">Inhibition of host RLR pathway by virus</keyword>
<keyword id="KW-0922">Interferon antiviral system evasion</keyword>
<keyword id="KW-0694">RNA-binding</keyword>
<keyword id="KW-0832">Ubl conjugation</keyword>
<keyword id="KW-0899">Viral immunoevasion</keyword>
<dbReference type="EMBL" id="M23968">
    <property type="protein sequence ID" value="AAA43553.1"/>
    <property type="molecule type" value="Genomic_RNA"/>
</dbReference>
<dbReference type="EMBL" id="AY210161">
    <property type="protein sequence ID" value="AAO46587.1"/>
    <property type="molecule type" value="Genomic_RNA"/>
</dbReference>
<dbReference type="SMR" id="P21431"/>
<dbReference type="GO" id="GO:0030430">
    <property type="term" value="C:host cell cytoplasm"/>
    <property type="evidence" value="ECO:0007669"/>
    <property type="project" value="UniProtKB-SubCell"/>
</dbReference>
<dbReference type="GO" id="GO:0042025">
    <property type="term" value="C:host cell nucleus"/>
    <property type="evidence" value="ECO:0007669"/>
    <property type="project" value="UniProtKB-SubCell"/>
</dbReference>
<dbReference type="GO" id="GO:0030291">
    <property type="term" value="F:protein serine/threonine kinase inhibitor activity"/>
    <property type="evidence" value="ECO:0007669"/>
    <property type="project" value="UniProtKB-KW"/>
</dbReference>
<dbReference type="GO" id="GO:0003723">
    <property type="term" value="F:RNA binding"/>
    <property type="evidence" value="ECO:0007669"/>
    <property type="project" value="UniProtKB-KW"/>
</dbReference>
<dbReference type="GO" id="GO:0039540">
    <property type="term" value="P:symbiont-mediated suppression of host cytoplasmic pattern recognition receptor signaling pathway via inhibition of RIG-I activity"/>
    <property type="evidence" value="ECO:0007669"/>
    <property type="project" value="UniProtKB-KW"/>
</dbReference>
<dbReference type="GO" id="GO:0039657">
    <property type="term" value="P:symbiont-mediated suppression of host gene expression"/>
    <property type="evidence" value="ECO:0007669"/>
    <property type="project" value="UniProtKB-KW"/>
</dbReference>
<dbReference type="GO" id="GO:0039524">
    <property type="term" value="P:symbiont-mediated suppression of host mRNA processing"/>
    <property type="evidence" value="ECO:0007669"/>
    <property type="project" value="UniProtKB-KW"/>
</dbReference>
<dbReference type="GO" id="GO:0039580">
    <property type="term" value="P:symbiont-mediated suppression of host PKR/eIFalpha signaling"/>
    <property type="evidence" value="ECO:0007669"/>
    <property type="project" value="UniProtKB-KW"/>
</dbReference>
<dbReference type="GO" id="GO:0039502">
    <property type="term" value="P:symbiont-mediated suppression of host type I interferon-mediated signaling pathway"/>
    <property type="evidence" value="ECO:0007669"/>
    <property type="project" value="UniProtKB-KW"/>
</dbReference>
<dbReference type="FunFam" id="1.10.287.10:FF:000001">
    <property type="entry name" value="Non-structural protein 1"/>
    <property type="match status" value="1"/>
</dbReference>
<dbReference type="FunFam" id="3.30.420.330:FF:000001">
    <property type="entry name" value="Non-structural protein 1"/>
    <property type="match status" value="1"/>
</dbReference>
<dbReference type="Gene3D" id="3.30.420.330">
    <property type="entry name" value="Influenza virus non-structural protein, effector domain"/>
    <property type="match status" value="1"/>
</dbReference>
<dbReference type="Gene3D" id="1.10.287.10">
    <property type="entry name" value="S15/NS1, RNA-binding"/>
    <property type="match status" value="1"/>
</dbReference>
<dbReference type="HAMAP" id="MF_04066">
    <property type="entry name" value="INFV_NS1"/>
    <property type="match status" value="1"/>
</dbReference>
<dbReference type="InterPro" id="IPR004208">
    <property type="entry name" value="NS1"/>
</dbReference>
<dbReference type="InterPro" id="IPR000256">
    <property type="entry name" value="NS1A"/>
</dbReference>
<dbReference type="InterPro" id="IPR038064">
    <property type="entry name" value="NS1A_effect_dom-like_sf"/>
</dbReference>
<dbReference type="InterPro" id="IPR009068">
    <property type="entry name" value="uS15_NS1_RNA-bd_sf"/>
</dbReference>
<dbReference type="Pfam" id="PF00600">
    <property type="entry name" value="Flu_NS1"/>
    <property type="match status" value="1"/>
</dbReference>
<dbReference type="SUPFAM" id="SSF143021">
    <property type="entry name" value="Ns1 effector domain-like"/>
    <property type="match status" value="1"/>
</dbReference>
<dbReference type="SUPFAM" id="SSF47060">
    <property type="entry name" value="S15/NS1 RNA-binding domain"/>
    <property type="match status" value="1"/>
</dbReference>
<evidence type="ECO:0000255" key="1">
    <source>
        <dbReference type="HAMAP-Rule" id="MF_04066"/>
    </source>
</evidence>
<feature type="chain" id="PRO_0000078918" description="Non-structural protein 1">
    <location>
        <begin position="1"/>
        <end position="217"/>
    </location>
</feature>
<feature type="region of interest" description="RNA-binding and homodimerization" evidence="1">
    <location>
        <begin position="1"/>
        <end position="73"/>
    </location>
</feature>
<feature type="region of interest" description="CPSF4-binding" evidence="1">
    <location>
        <begin position="180"/>
        <end position="215"/>
    </location>
</feature>
<feature type="short sequence motif" description="Nuclear localization signal" evidence="1">
    <location>
        <begin position="34"/>
        <end position="38"/>
    </location>
</feature>
<feature type="short sequence motif" description="Nuclear export signal" evidence="1">
    <location>
        <begin position="137"/>
        <end position="146"/>
    </location>
</feature>
<gene>
    <name evidence="1" type="primary">NS</name>
</gene>
<comment type="function">
    <text evidence="1">Inhibits post-transcriptional processing of cellular pre-mRNA, by binding and inhibiting two cellular proteins that are required for the 3'-end processing of cellular pre-mRNAs: the 30 kDa cleavage and polyadenylation specificity factor/CPSF4 and the poly(A)-binding protein 2/PABPN1. In turn, unprocessed 3' end pre-mRNAs accumulate in the host nucleus and are no longer exported to the cytoplasm. Cellular protein synthesis is thereby shut off very early after virus infection. Viral protein synthesis is not affected by the inhibition of the cellular 3' end processing machinery because the poly(A) tails of viral mRNAs are produced by the viral polymerase through a stuttering mechanism. Prevents the establishment of the cellular antiviral state by inhibiting TRIM25-mediated RIGI ubiquitination, which normally triggers the antiviral transduction signal that leads to the activation of type I IFN genes by transcription factors IRF3 and IRF7. Also binds poly(A) and U6 snRNA. Inhibits the integrated stress response (ISR) in the infected cell by blocking dsRNA binding by EIF2AK2/PKR and further phosphorylation of EIF2S1/EIF-2ALPHA. Stress granule formation is thus inhibited, which allows protein synthesis and viral replication.</text>
</comment>
<comment type="subunit">
    <text evidence="1">Homodimer. Interacts with host TRIM25 (via coiled coil); this interaction specifically inhibits TRIM25 multimerization and TRIM25-mediated RIGI CARD ubiquitination. Interacts with human EIF2AK2/PKR, CPSF4, IVNS1ABP and PABPN1.</text>
</comment>
<comment type="subcellular location">
    <subcellularLocation>
        <location evidence="1">Host nucleus</location>
    </subcellularLocation>
    <subcellularLocation>
        <location evidence="1">Host cytoplasm</location>
    </subcellularLocation>
    <text evidence="1">In uninfected, transfected cells, NS1 is localized in the nucleus. Only in virus infected cells, the nuclear export signal is unveiled, presumably by a viral protein, and a fraction of NS1 is exported in the cytoplasm.</text>
</comment>
<comment type="alternative products">
    <event type="alternative splicing"/>
    <isoform>
        <id>P21431-1</id>
        <name>NS1</name>
        <sequence type="displayed"/>
    </isoform>
    <isoform>
        <id>P69259-1</id>
        <name>NEP</name>
        <name>NS2</name>
        <sequence type="external"/>
    </isoform>
</comment>
<comment type="domain">
    <text evidence="1">The dsRNA-binding region is required for suppression of RNA silencing.</text>
</comment>
<comment type="PTM">
    <text evidence="1">Upon interferon induction, ISGylated via host HERC5; this results in the impairment of NS1 interaction with RNA targets due to its inability to form homodimers and to interact with host EIF2AK2/PKR.</text>
</comment>
<comment type="similarity">
    <text evidence="1">Belongs to the influenza A viruses NS1 family.</text>
</comment>